<protein>
    <recommendedName>
        <fullName>DNA-directed RNA polymerase I subunit RPA190</fullName>
        <ecNumber>2.7.7.6</ecNumber>
    </recommendedName>
    <alternativeName>
        <fullName>DNA-directed RNA polymerase I 190 kDa polypeptide</fullName>
        <shortName>A190</shortName>
    </alternativeName>
    <alternativeName>
        <fullName>DNA-directed RNA polymerase I largest subunit</fullName>
    </alternativeName>
</protein>
<proteinExistence type="evidence at protein level"/>
<name>RPA1_YEAST</name>
<keyword id="KW-0002">3D-structure</keyword>
<keyword id="KW-0240">DNA-directed RNA polymerase</keyword>
<keyword id="KW-0460">Magnesium</keyword>
<keyword id="KW-0479">Metal-binding</keyword>
<keyword id="KW-0548">Nucleotidyltransferase</keyword>
<keyword id="KW-0539">Nucleus</keyword>
<keyword id="KW-0597">Phosphoprotein</keyword>
<keyword id="KW-1185">Reference proteome</keyword>
<keyword id="KW-0690">Ribosome biogenesis</keyword>
<keyword id="KW-0804">Transcription</keyword>
<keyword id="KW-0808">Transferase</keyword>
<keyword id="KW-0862">Zinc</keyword>
<accession>P10964</accession>
<accession>D6W336</accession>
<accession>Q99330</accession>
<reference key="1">
    <citation type="journal article" date="1988" name="J. Biol. Chem.">
        <title>RPA190, the gene coding for the largest subunit of yeast RNA polymerase A.</title>
        <authorList>
            <person name="Memet S."/>
            <person name="Gouy M."/>
            <person name="Marck C."/>
            <person name="Sentenac A."/>
            <person name="Buhler J.-M."/>
        </authorList>
    </citation>
    <scope>NUCLEOTIDE SEQUENCE [GENOMIC DNA]</scope>
</reference>
<reference key="2">
    <citation type="journal article" date="1996" name="Yeast">
        <title>Nucleotide sequence analysis of a 40 kb segment on the right arm of yeast chromosome XV reveals 18 open reading frames including a new pyruvate kinase and three homologues to chromosome I genes.</title>
        <authorList>
            <person name="Purnelle B."/>
            <person name="Goffeau A."/>
        </authorList>
    </citation>
    <scope>NUCLEOTIDE SEQUENCE [GENOMIC DNA]</scope>
    <source>
        <strain>ATCC 90843 / S288c / FY73</strain>
    </source>
</reference>
<reference key="3">
    <citation type="journal article" date="1997" name="Nature">
        <title>The nucleotide sequence of Saccharomyces cerevisiae chromosome XV.</title>
        <authorList>
            <person name="Dujon B."/>
            <person name="Albermann K."/>
            <person name="Aldea M."/>
            <person name="Alexandraki D."/>
            <person name="Ansorge W."/>
            <person name="Arino J."/>
            <person name="Benes V."/>
            <person name="Bohn C."/>
            <person name="Bolotin-Fukuhara M."/>
            <person name="Bordonne R."/>
            <person name="Boyer J."/>
            <person name="Camasses A."/>
            <person name="Casamayor A."/>
            <person name="Casas C."/>
            <person name="Cheret G."/>
            <person name="Cziepluch C."/>
            <person name="Daignan-Fornier B."/>
            <person name="Dang V.-D."/>
            <person name="de Haan M."/>
            <person name="Delius H."/>
            <person name="Durand P."/>
            <person name="Fairhead C."/>
            <person name="Feldmann H."/>
            <person name="Gaillon L."/>
            <person name="Galisson F."/>
            <person name="Gamo F.-J."/>
            <person name="Gancedo C."/>
            <person name="Goffeau A."/>
            <person name="Goulding S.E."/>
            <person name="Grivell L.A."/>
            <person name="Habbig B."/>
            <person name="Hand N.J."/>
            <person name="Hani J."/>
            <person name="Hattenhorst U."/>
            <person name="Hebling U."/>
            <person name="Hernando Y."/>
            <person name="Herrero E."/>
            <person name="Heumann K."/>
            <person name="Hiesel R."/>
            <person name="Hilger F."/>
            <person name="Hofmann B."/>
            <person name="Hollenberg C.P."/>
            <person name="Hughes B."/>
            <person name="Jauniaux J.-C."/>
            <person name="Kalogeropoulos A."/>
            <person name="Katsoulou C."/>
            <person name="Kordes E."/>
            <person name="Lafuente M.J."/>
            <person name="Landt O."/>
            <person name="Louis E.J."/>
            <person name="Maarse A.C."/>
            <person name="Madania A."/>
            <person name="Mannhaupt G."/>
            <person name="Marck C."/>
            <person name="Martin R.P."/>
            <person name="Mewes H.-W."/>
            <person name="Michaux G."/>
            <person name="Paces V."/>
            <person name="Parle-McDermott A.G."/>
            <person name="Pearson B.M."/>
            <person name="Perrin A."/>
            <person name="Pettersson B."/>
            <person name="Poch O."/>
            <person name="Pohl T.M."/>
            <person name="Poirey R."/>
            <person name="Portetelle D."/>
            <person name="Pujol A."/>
            <person name="Purnelle B."/>
            <person name="Ramezani Rad M."/>
            <person name="Rechmann S."/>
            <person name="Schwager C."/>
            <person name="Schweizer M."/>
            <person name="Sor F."/>
            <person name="Sterky F."/>
            <person name="Tarassov I.A."/>
            <person name="Teodoru C."/>
            <person name="Tettelin H."/>
            <person name="Thierry A."/>
            <person name="Tobiasch E."/>
            <person name="Tzermia M."/>
            <person name="Uhlen M."/>
            <person name="Unseld M."/>
            <person name="Valens M."/>
            <person name="Vandenbol M."/>
            <person name="Vetter I."/>
            <person name="Vlcek C."/>
            <person name="Voet M."/>
            <person name="Volckaert G."/>
            <person name="Voss H."/>
            <person name="Wambutt R."/>
            <person name="Wedler H."/>
            <person name="Wiemann S."/>
            <person name="Winsor B."/>
            <person name="Wolfe K.H."/>
            <person name="Zollner A."/>
            <person name="Zumstein E."/>
            <person name="Kleine K."/>
        </authorList>
    </citation>
    <scope>NUCLEOTIDE SEQUENCE [LARGE SCALE GENOMIC DNA]</scope>
    <source>
        <strain>ATCC 204508 / S288c</strain>
    </source>
</reference>
<reference key="4">
    <citation type="journal article" date="2014" name="G3 (Bethesda)">
        <title>The reference genome sequence of Saccharomyces cerevisiae: Then and now.</title>
        <authorList>
            <person name="Engel S.R."/>
            <person name="Dietrich F.S."/>
            <person name="Fisk D.G."/>
            <person name="Binkley G."/>
            <person name="Balakrishnan R."/>
            <person name="Costanzo M.C."/>
            <person name="Dwight S.S."/>
            <person name="Hitz B.C."/>
            <person name="Karra K."/>
            <person name="Nash R.S."/>
            <person name="Weng S."/>
            <person name="Wong E.D."/>
            <person name="Lloyd P."/>
            <person name="Skrzypek M.S."/>
            <person name="Miyasato S.R."/>
            <person name="Simison M."/>
            <person name="Cherry J.M."/>
        </authorList>
    </citation>
    <scope>GENOME REANNOTATION</scope>
    <source>
        <strain>ATCC 204508 / S288c</strain>
    </source>
</reference>
<reference key="5">
    <citation type="journal article" date="2001" name="Proc. Natl. Acad. Sci. U.S.A.">
        <title>Differential roles of phosphorylation in the formation of transcriptional active RNA polymerase I.</title>
        <authorList>
            <person name="Fath S."/>
            <person name="Milkereit P."/>
            <person name="Peyroche G."/>
            <person name="Riva M."/>
            <person name="Carles C."/>
            <person name="Tschochner H."/>
        </authorList>
    </citation>
    <scope>IDENTIFICATION IN THE RNA POL I COMPLEX</scope>
</reference>
<reference key="6">
    <citation type="journal article" date="2007" name="J. Proteome Res.">
        <title>Large-scale phosphorylation analysis of alpha-factor-arrested Saccharomyces cerevisiae.</title>
        <authorList>
            <person name="Li X."/>
            <person name="Gerber S.A."/>
            <person name="Rudner A.D."/>
            <person name="Beausoleil S.A."/>
            <person name="Haas W."/>
            <person name="Villen J."/>
            <person name="Elias J.E."/>
            <person name="Gygi S.P."/>
        </authorList>
    </citation>
    <scope>IDENTIFICATION BY MASS SPECTROMETRY [LARGE SCALE ANALYSIS]</scope>
    <source>
        <strain>ADR376</strain>
    </source>
</reference>
<reference key="7">
    <citation type="journal article" date="2008" name="Mol. Cell. Proteomics">
        <title>A multidimensional chromatography technology for in-depth phosphoproteome analysis.</title>
        <authorList>
            <person name="Albuquerque C.P."/>
            <person name="Smolka M.B."/>
            <person name="Payne S.H."/>
            <person name="Bafna V."/>
            <person name="Eng J."/>
            <person name="Zhou H."/>
        </authorList>
    </citation>
    <scope>PHOSPHORYLATION [LARGE SCALE ANALYSIS] AT SER-1636</scope>
    <scope>IDENTIFICATION BY MASS SPECTROMETRY [LARGE SCALE ANALYSIS]</scope>
</reference>
<reference key="8">
    <citation type="journal article" date="2009" name="Science">
        <title>Global analysis of Cdk1 substrate phosphorylation sites provides insights into evolution.</title>
        <authorList>
            <person name="Holt L.J."/>
            <person name="Tuch B.B."/>
            <person name="Villen J."/>
            <person name="Johnson A.D."/>
            <person name="Gygi S.P."/>
            <person name="Morgan D.O."/>
        </authorList>
    </citation>
    <scope>PHOSPHORYLATION [LARGE SCALE ANALYSIS] AT SER-889</scope>
    <scope>IDENTIFICATION BY MASS SPECTROMETRY [LARGE SCALE ANALYSIS]</scope>
</reference>
<reference key="9">
    <citation type="journal article" date="2002" name="EMBO J.">
        <title>Localization of the yeast RNA polymerase I-specific subunits.</title>
        <authorList>
            <person name="Bischler N."/>
            <person name="Brino L."/>
            <person name="Carles C."/>
            <person name="Riva M."/>
            <person name="Tschochner H."/>
            <person name="Mallouh V."/>
            <person name="Schultz P."/>
        </authorList>
    </citation>
    <scope>ELECTRON MICROSCOPY OF THE RNA POLYMERASE I COMPLEX</scope>
</reference>
<reference key="10">
    <citation type="journal article" date="2002" name="Mol. Microbiol.">
        <title>Rpa12p, a conserved RNA polymerase I subunit with two functional domains.</title>
        <authorList>
            <person name="Van Mullem V."/>
            <person name="Landrieux E."/>
            <person name="Vandenhaute J."/>
            <person name="Thuriaux P."/>
        </authorList>
    </citation>
    <scope>IDENTIFICATION IN THE RNA POL I COMPLEX</scope>
</reference>
<reference key="11">
    <citation type="journal article" date="2002" name="Proc. Natl. Acad. Sci. U.S.A.">
        <title>The A14-A43 heterodimer subunit in yeast RNA pol I and their relationship to Rpb4-Rpb7 pol II subunits.</title>
        <authorList>
            <person name="Peyroche G."/>
            <person name="Levillain E."/>
            <person name="Siaut M."/>
            <person name="Callebaut I."/>
            <person name="Schultz P."/>
            <person name="Sentenac A."/>
            <person name="Riva M."/>
            <person name="Carles C."/>
        </authorList>
    </citation>
    <scope>IDENTIFICATION IN THE RNA POL I COMPLEX</scope>
</reference>
<reference key="12">
    <citation type="journal article" date="2003" name="Nature">
        <title>Global analysis of protein localization in budding yeast.</title>
        <authorList>
            <person name="Huh W.-K."/>
            <person name="Falvo J.V."/>
            <person name="Gerke L.C."/>
            <person name="Carroll A.S."/>
            <person name="Howson R.W."/>
            <person name="Weissman J.S."/>
            <person name="O'Shea E.K."/>
        </authorList>
    </citation>
    <scope>SUBCELLULAR LOCATION [LARGE SCALE ANALYSIS]</scope>
</reference>
<reference key="13">
    <citation type="journal article" date="2003" name="Nature">
        <title>Global analysis of protein expression in yeast.</title>
        <authorList>
            <person name="Ghaemmaghami S."/>
            <person name="Huh W.-K."/>
            <person name="Bower K."/>
            <person name="Howson R.W."/>
            <person name="Belle A."/>
            <person name="Dephoure N."/>
            <person name="O'Shea E.K."/>
            <person name="Weissman J.S."/>
        </authorList>
    </citation>
    <scope>LEVEL OF PROTEIN EXPRESSION [LARGE SCALE ANALYSIS]</scope>
</reference>
<reference key="14">
    <citation type="journal article" date="2007" name="Cell">
        <title>Functional architecture of RNA polymerase I.</title>
        <authorList>
            <person name="Kuhn C.D."/>
            <person name="Geiger S.R."/>
            <person name="Baumli S."/>
            <person name="Gartmann M."/>
            <person name="Gerber J."/>
            <person name="Jennebach S."/>
            <person name="Mielke T."/>
            <person name="Tschochner H."/>
            <person name="Beckmann R."/>
            <person name="Cramer P."/>
        </authorList>
    </citation>
    <scope>STRUCTURE BY ELECTRON MICROSCOPY (12.00 ANGSTROMS) OF THE POL I COMPLEX</scope>
    <scope>FUNCTION</scope>
    <scope>CATALYTIC ACTIVITY</scope>
    <scope>SUBUNIT</scope>
</reference>
<reference key="15">
    <citation type="journal article" date="2013" name="Nature">
        <title>Crystal structure of the 14-subunit RNA polymerase I.</title>
        <authorList>
            <person name="Fernandez-Tornero C."/>
            <person name="Moreno-Morcillo M."/>
            <person name="Rashid U.J."/>
            <person name="Taylor N.M."/>
            <person name="Ruiz F.M."/>
            <person name="Gruene T."/>
            <person name="Legrand P."/>
            <person name="Steuerwald U."/>
            <person name="Muller C.W."/>
        </authorList>
    </citation>
    <scope>X-RAY CRYSTALLOGRAPHY (3.0 ANGSTROMS) OF THE POL I COMPLEX</scope>
    <scope>FUNCTION</scope>
    <scope>CATALYTIC ACTIVITY</scope>
    <scope>ZINC-BINDING</scope>
    <scope>SUBUNIT</scope>
</reference>
<reference key="16">
    <citation type="journal article" date="2013" name="Nature">
        <title>RNA polymerase I structure and transcription regulation.</title>
        <authorList>
            <person name="Engel C."/>
            <person name="Sainsbury S."/>
            <person name="Cheung A.C."/>
            <person name="Kostrewa D."/>
            <person name="Cramer P."/>
        </authorList>
    </citation>
    <scope>X-RAY CRYSTALLOGRAPHY (2.8 ANGSTROMS) OF THE POL I COMPLEX</scope>
    <scope>FUNCTION</scope>
    <scope>CATALYTIC ACTIVITY</scope>
    <scope>ZINC-BINDING</scope>
    <scope>SUBUNIT</scope>
</reference>
<comment type="function">
    <text evidence="9 10 11">DNA-dependent RNA polymerases catalyze the transcription of DNA into RNA using the four ribonucleoside triphosphates as substrates. Component of RNA polymerase I (Pol I) which synthesizes ribosomal RNA precursors. Besides, RNA polymerase I has intrinsic RNA cleavage activity. RPA190 and RPA135 both contribute to the polymerase catalytic activity and together form the Pol I active center. In addition, subunit RPA12 contributes a catalytic zinc ribbon that is required for RNA cleavage by Pol I. A single stranded DNA template strand of the promoter is positioned within the central active site cleft of Pol I. A bridging helix emanates from RPA190 and crosses the cleft near the catalytic site and is thought to promote translocation of Pol I by acting as a ratchet that moves the RNA-DNA hybrid through the active site by switching from straight to bent conformations at each step of nucleotide addition.</text>
</comment>
<comment type="catalytic activity">
    <reaction evidence="9 10 11">
        <text>RNA(n) + a ribonucleoside 5'-triphosphate = RNA(n+1) + diphosphate</text>
        <dbReference type="Rhea" id="RHEA:21248"/>
        <dbReference type="Rhea" id="RHEA-COMP:14527"/>
        <dbReference type="Rhea" id="RHEA-COMP:17342"/>
        <dbReference type="ChEBI" id="CHEBI:33019"/>
        <dbReference type="ChEBI" id="CHEBI:61557"/>
        <dbReference type="ChEBI" id="CHEBI:140395"/>
        <dbReference type="EC" id="2.7.7.6"/>
    </reaction>
</comment>
<comment type="subunit">
    <text evidence="4 5 6 9 10 11">Component of the RNA polymerase I (Pol I) complex consisting of 14 subunits: RPA135, RPA190, RPC40, RPA14, RPB5, RPO26, RPA43, RPB8, RPA12, RPB10, RPC19, RPC10, RPA49 and RPA34. The complex is composed of a horseshoe-shaped core containing ten subunits (RPA135, RPA190, RPB5, RPO26, RPB8, RPB10, RPC10, RPA12, RPC19 and RPC40) where RPA135 and RPA190 form the DNA-binding cleft. Outside of the core, RPA14 and RPA43 form the stalk that mediates interactions with transcription initiation factors and newly synthesized RNA.</text>
</comment>
<comment type="interaction">
    <interactant intactId="EBI-15730">
        <id>P10964</id>
    </interactant>
    <interactant intactId="EBI-505">
        <id>P53131</id>
        <label>PRP43</label>
    </interactant>
    <organismsDiffer>false</organismsDiffer>
    <experiments>2</experiments>
</comment>
<comment type="interaction">
    <interactant intactId="EBI-15730">
        <id>P10964</id>
    </interactant>
    <interactant intactId="EBI-15736">
        <id>P22138</id>
        <label>RPA135</label>
    </interactant>
    <organismsDiffer>false</organismsDiffer>
    <experiments>5</experiments>
</comment>
<comment type="interaction">
    <interactant intactId="EBI-15730">
        <id>P10964</id>
    </interactant>
    <interactant intactId="EBI-15831">
        <id>P07703</id>
        <label>RPC40</label>
    </interactant>
    <organismsDiffer>false</organismsDiffer>
    <experiments>5</experiments>
</comment>
<comment type="interaction">
    <interactant intactId="EBI-15730">
        <id>P10964</id>
    </interactant>
    <interactant intactId="EBI-15786">
        <id>P20435</id>
        <label>RPO26</label>
    </interactant>
    <organismsDiffer>false</organismsDiffer>
    <experiments>3</experiments>
</comment>
<comment type="subcellular location">
    <subcellularLocation>
        <location evidence="7">Nucleus</location>
        <location evidence="7">Nucleolus</location>
    </subcellularLocation>
</comment>
<comment type="miscellaneous">
    <text evidence="8">Present with 2840 molecules/cell in log phase SD medium.</text>
</comment>
<comment type="similarity">
    <text evidence="12">Belongs to the RNA polymerase beta' chain family.</text>
</comment>
<sequence>MDISKPVGSEITSVDFGILTAKEIRNLSAKQITNPTVLDNLGHPVSGGLYDLALGAFLRNLCSTCGLDEKFCPGHQGHIELPVPCYNPLFFNQLYIYLRASCLFCHHFRLKSVEVHRYACKLRLLQYGLIDESYKLDEITLGSLNSSMYTDDEAIEDNEDEMDGEGSKQSKDISSTLLNELKSKRSEYVDMAIAKALSDGRTTERGSFTATVNDERKKLVHEFHKKLLSRGKCDNCGMFSPKFRKDGFTKIFETALNEKQITNNRVKGFIRQDMIKKQKQAKKLDGSNEASANDEESFDVGRNPTTRPKTGSTYILSTEVKNILDTVFRKEQCVLQYVFHSRPNLSRKLVKADSFFMDVLVVPPTRFRLPSKLGEEVHENSQNQLLSKVLTTSLLIRDLNDDLSKLQKDKVSLEDRRVIFSRLMNAFVTIQNDVNAFIDSTKAQGRTSGKVPIPGVKQALEKKEGLFRKHMMGKRVNYAARSVISPDPNIETNEIGVPPVFAVKLTYPEPVTAYNIAELRQAVINGPDKWPGATQIQNEDGSLVSLIGMSVEQRKALANQLLTPSSNVSTHTLNKKVYRHIKNRDVVLMNRQPTLHKASMMGHKVRVLPNEKTLRLHYANTGAYNADFDGDEMNMHFPQNENARAEALNLANTDSQYLTPTSGSPVRGLIQDHISAGVWLTSKDSFFTREQYQQYIYGCIRPEDGHTTRSKIVTLPPTIFKPYPLWTGKQIITTVLLNVTPPDMPGINLISKNKIKNEYWGKGSLENEVLFKDGALLCGILDKSQYGASKYGIVHSLHEVYGPEVAAKVLSVLGRLFTNYITATAFTCGMDDLRLTAEGNKWRTDILKTSVDTGREAAAEVTNLDKDTPADDPELLKRLQEILRDNNKSGILDAVTSSKVNAITSQVVSKCVPDGTMKKFPCNSMQAMALSGAKGSNVNVSQIMCLLGQQALEGRRVPVMVSGKTLPSFKPYETDAMAGGYVKGRFYSGIKPQEYYFHCMAGREGLIDTAVKTSRSGYLQRCLTKQLEGVHVSYDNSIRDADGTLVQFMYGGDAIDITKESHMTQFEFCLDNYYALLKKYNPSALIEHLDVESALKYSKKTLKYRKKHSKEPHYKQSVKYDPVLAKYNPAKYLGSVSENFQDKLESFLDKNSKLFKSSDGVNEKKFRALMQLKYMRSLINPGEAVGIIASQSVGEPSTQMTLNTFHFAGHGAANVTLGIPRLREIVMTASAAIKTPQMTLPIWNDVSDEQADTFCKSISKVLLSEVIDKVIVTETTGTSNTAGGNAARSYVIHMRFFDNNEYSEEYDVSKEELQNVISNQFIHLLEAAIVKEIKKQKRTTGPDIGVAVPRLQTDVANSSSNSKRLEEDNDEEQSHKKTKQAVSYDEPDEDEIETMREAEKSSDEEGIDSDKESDSDSEDEDVDMNEQINKSIVEANNNMNKVQRDRQSAIISHHRFITKYNFDDESGKWCEFKLELAADTEKLLMVNIVEEICRKSIIRQIPHIDRCVHPEPENGKRVLVTEGVNFQAMWDQEAFIDVDGITSNDVAAVLKTYGVEAARNTIVNEINNVFSRYAISVSFRHLDLIADMMTRQGTYLAFNRQGMETSTSSFMKMSYETTCQFLTKAVLDNEREQLDSPSARIVVGKLNNVGTGSFDVLAKVPNAA</sequence>
<organism>
    <name type="scientific">Saccharomyces cerevisiae (strain ATCC 204508 / S288c)</name>
    <name type="common">Baker's yeast</name>
    <dbReference type="NCBI Taxonomy" id="559292"/>
    <lineage>
        <taxon>Eukaryota</taxon>
        <taxon>Fungi</taxon>
        <taxon>Dikarya</taxon>
        <taxon>Ascomycota</taxon>
        <taxon>Saccharomycotina</taxon>
        <taxon>Saccharomycetes</taxon>
        <taxon>Saccharomycetales</taxon>
        <taxon>Saccharomycetaceae</taxon>
        <taxon>Saccharomyces</taxon>
    </lineage>
</organism>
<dbReference type="EC" id="2.7.7.6"/>
<dbReference type="EMBL" id="J03530">
    <property type="protein sequence ID" value="AAA34890.1"/>
    <property type="molecule type" value="Genomic_DNA"/>
</dbReference>
<dbReference type="EMBL" id="X95720">
    <property type="protein sequence ID" value="CAA65029.1"/>
    <property type="molecule type" value="Genomic_DNA"/>
</dbReference>
<dbReference type="EMBL" id="Z75249">
    <property type="protein sequence ID" value="CAA99665.1"/>
    <property type="molecule type" value="Genomic_DNA"/>
</dbReference>
<dbReference type="EMBL" id="BK006948">
    <property type="protein sequence ID" value="DAA11102.1"/>
    <property type="molecule type" value="Genomic_DNA"/>
</dbReference>
<dbReference type="PIR" id="S67250">
    <property type="entry name" value="S67250"/>
</dbReference>
<dbReference type="RefSeq" id="NP_014986.3">
    <property type="nucleotide sequence ID" value="NM_001183761.3"/>
</dbReference>
<dbReference type="PDB" id="4C2M">
    <property type="method" value="X-ray"/>
    <property type="resolution" value="2.80 A"/>
    <property type="chains" value="A/P=1-1664"/>
</dbReference>
<dbReference type="PDB" id="4C3H">
    <property type="method" value="X-ray"/>
    <property type="resolution" value="3.27 A"/>
    <property type="chains" value="A=1-1664"/>
</dbReference>
<dbReference type="PDB" id="4C3I">
    <property type="method" value="X-ray"/>
    <property type="resolution" value="3.00 A"/>
    <property type="chains" value="A=1-1664"/>
</dbReference>
<dbReference type="PDB" id="4C3J">
    <property type="method" value="X-ray"/>
    <property type="resolution" value="3.35 A"/>
    <property type="chains" value="A=1-1664"/>
</dbReference>
<dbReference type="PDB" id="4YM7">
    <property type="method" value="X-ray"/>
    <property type="resolution" value="5.50 A"/>
    <property type="chains" value="AA/BA/CA/DA/EA/FA=1-1664"/>
</dbReference>
<dbReference type="PDB" id="5G5L">
    <property type="method" value="EM"/>
    <property type="resolution" value="4.80 A"/>
    <property type="chains" value="A=1-1664"/>
</dbReference>
<dbReference type="PDB" id="5LMX">
    <property type="method" value="EM"/>
    <property type="resolution" value="4.90 A"/>
    <property type="chains" value="A=1-1664"/>
</dbReference>
<dbReference type="PDB" id="5M3F">
    <property type="method" value="EM"/>
    <property type="resolution" value="3.80 A"/>
    <property type="chains" value="A=1-1664"/>
</dbReference>
<dbReference type="PDB" id="5M3M">
    <property type="method" value="EM"/>
    <property type="resolution" value="4.00 A"/>
    <property type="chains" value="A=1-1664"/>
</dbReference>
<dbReference type="PDB" id="5M5W">
    <property type="method" value="EM"/>
    <property type="resolution" value="3.80 A"/>
    <property type="chains" value="A=1-1664"/>
</dbReference>
<dbReference type="PDB" id="5M5X">
    <property type="method" value="EM"/>
    <property type="resolution" value="4.00 A"/>
    <property type="chains" value="A=1-1664"/>
</dbReference>
<dbReference type="PDB" id="5M5Y">
    <property type="method" value="EM"/>
    <property type="resolution" value="4.00 A"/>
    <property type="chains" value="A=1-1664"/>
</dbReference>
<dbReference type="PDB" id="5M64">
    <property type="method" value="EM"/>
    <property type="resolution" value="4.60 A"/>
    <property type="chains" value="A=1-1664"/>
</dbReference>
<dbReference type="PDB" id="5N5Y">
    <property type="method" value="EM"/>
    <property type="resolution" value="7.70 A"/>
    <property type="chains" value="A=1-1664"/>
</dbReference>
<dbReference type="PDB" id="5N5Z">
    <property type="method" value="EM"/>
    <property type="resolution" value="7.70 A"/>
    <property type="chains" value="A=1-1664"/>
</dbReference>
<dbReference type="PDB" id="5N60">
    <property type="method" value="EM"/>
    <property type="resolution" value="7.70 A"/>
    <property type="chains" value="A=1-1664"/>
</dbReference>
<dbReference type="PDB" id="5N61">
    <property type="method" value="EM"/>
    <property type="resolution" value="3.40 A"/>
    <property type="chains" value="A=1-1664"/>
</dbReference>
<dbReference type="PDB" id="5OA1">
    <property type="method" value="EM"/>
    <property type="resolution" value="4.40 A"/>
    <property type="chains" value="A=1-1664"/>
</dbReference>
<dbReference type="PDB" id="5W5Y">
    <property type="method" value="EM"/>
    <property type="resolution" value="3.80 A"/>
    <property type="chains" value="A=1-1664"/>
</dbReference>
<dbReference type="PDB" id="5W64">
    <property type="method" value="EM"/>
    <property type="resolution" value="4.20 A"/>
    <property type="chains" value="A=1-1664"/>
</dbReference>
<dbReference type="PDB" id="5W65">
    <property type="method" value="EM"/>
    <property type="resolution" value="4.30 A"/>
    <property type="chains" value="A=1-1664"/>
</dbReference>
<dbReference type="PDB" id="5W66">
    <property type="method" value="EM"/>
    <property type="resolution" value="3.90 A"/>
    <property type="chains" value="A=1-1664"/>
</dbReference>
<dbReference type="PDB" id="6H67">
    <property type="method" value="EM"/>
    <property type="resolution" value="3.60 A"/>
    <property type="chains" value="A=1-1664"/>
</dbReference>
<dbReference type="PDB" id="6H68">
    <property type="method" value="EM"/>
    <property type="resolution" value="4.60 A"/>
    <property type="chains" value="A=1-1664"/>
</dbReference>
<dbReference type="PDB" id="6HKO">
    <property type="method" value="EM"/>
    <property type="resolution" value="3.42 A"/>
    <property type="chains" value="A=1-1664"/>
</dbReference>
<dbReference type="PDB" id="6HLQ">
    <property type="method" value="EM"/>
    <property type="resolution" value="3.18 A"/>
    <property type="chains" value="A=1-1664"/>
</dbReference>
<dbReference type="PDB" id="6HLR">
    <property type="method" value="EM"/>
    <property type="resolution" value="3.18 A"/>
    <property type="chains" value="A=1-1664"/>
</dbReference>
<dbReference type="PDB" id="6HLS">
    <property type="method" value="EM"/>
    <property type="resolution" value="3.21 A"/>
    <property type="chains" value="A=1-1664"/>
</dbReference>
<dbReference type="PDB" id="6RQH">
    <property type="method" value="EM"/>
    <property type="resolution" value="3.70 A"/>
    <property type="chains" value="A=1-1664"/>
</dbReference>
<dbReference type="PDB" id="6RQL">
    <property type="method" value="EM"/>
    <property type="resolution" value="2.90 A"/>
    <property type="chains" value="A=1-1664"/>
</dbReference>
<dbReference type="PDB" id="6RQT">
    <property type="method" value="EM"/>
    <property type="resolution" value="4.00 A"/>
    <property type="chains" value="A=1-1664"/>
</dbReference>
<dbReference type="PDB" id="6RRD">
    <property type="method" value="EM"/>
    <property type="resolution" value="3.10 A"/>
    <property type="chains" value="A=1-1664"/>
</dbReference>
<dbReference type="PDB" id="6RUI">
    <property type="method" value="EM"/>
    <property type="resolution" value="2.70 A"/>
    <property type="chains" value="A=1-1664"/>
</dbReference>
<dbReference type="PDB" id="6RUO">
    <property type="method" value="EM"/>
    <property type="resolution" value="3.50 A"/>
    <property type="chains" value="A=1-1664"/>
</dbReference>
<dbReference type="PDB" id="6RWE">
    <property type="method" value="EM"/>
    <property type="resolution" value="3.00 A"/>
    <property type="chains" value="A=1-1664"/>
</dbReference>
<dbReference type="PDB" id="6TPS">
    <property type="method" value="EM"/>
    <property type="resolution" value="3.54 A"/>
    <property type="chains" value="A=1-1664"/>
</dbReference>
<dbReference type="PDBsum" id="4C2M"/>
<dbReference type="PDBsum" id="4C3H"/>
<dbReference type="PDBsum" id="4C3I"/>
<dbReference type="PDBsum" id="4C3J"/>
<dbReference type="PDBsum" id="4YM7"/>
<dbReference type="PDBsum" id="5G5L"/>
<dbReference type="PDBsum" id="5LMX"/>
<dbReference type="PDBsum" id="5M3F"/>
<dbReference type="PDBsum" id="5M3M"/>
<dbReference type="PDBsum" id="5M5W"/>
<dbReference type="PDBsum" id="5M5X"/>
<dbReference type="PDBsum" id="5M5Y"/>
<dbReference type="PDBsum" id="5M64"/>
<dbReference type="PDBsum" id="5N5Y"/>
<dbReference type="PDBsum" id="5N5Z"/>
<dbReference type="PDBsum" id="5N60"/>
<dbReference type="PDBsum" id="5N61"/>
<dbReference type="PDBsum" id="5OA1"/>
<dbReference type="PDBsum" id="5W5Y"/>
<dbReference type="PDBsum" id="5W64"/>
<dbReference type="PDBsum" id="5W65"/>
<dbReference type="PDBsum" id="5W66"/>
<dbReference type="PDBsum" id="6H67"/>
<dbReference type="PDBsum" id="6H68"/>
<dbReference type="PDBsum" id="6HKO"/>
<dbReference type="PDBsum" id="6HLQ"/>
<dbReference type="PDBsum" id="6HLR"/>
<dbReference type="PDBsum" id="6HLS"/>
<dbReference type="PDBsum" id="6RQH"/>
<dbReference type="PDBsum" id="6RQL"/>
<dbReference type="PDBsum" id="6RQT"/>
<dbReference type="PDBsum" id="6RRD"/>
<dbReference type="PDBsum" id="6RUI"/>
<dbReference type="PDBsum" id="6RUO"/>
<dbReference type="PDBsum" id="6RWE"/>
<dbReference type="PDBsum" id="6TPS"/>
<dbReference type="EMDB" id="EMD-0146"/>
<dbReference type="EMDB" id="EMD-0147"/>
<dbReference type="EMDB" id="EMD-0238"/>
<dbReference type="EMDB" id="EMD-0239"/>
<dbReference type="EMDB" id="EMD-0240"/>
<dbReference type="EMDB" id="EMD-0241"/>
<dbReference type="EMDB" id="EMD-10006"/>
<dbReference type="EMDB" id="EMD-10007"/>
<dbReference type="EMDB" id="EMD-10038"/>
<dbReference type="EMDB" id="EMD-10544"/>
<dbReference type="EMDB" id="EMD-3439"/>
<dbReference type="EMDB" id="EMD-3446"/>
<dbReference type="EMDB" id="EMD-3447"/>
<dbReference type="EMDB" id="EMD-3448"/>
<dbReference type="EMDB" id="EMD-3449"/>
<dbReference type="EMDB" id="EMD-3590"/>
<dbReference type="EMDB" id="EMD-3591"/>
<dbReference type="EMDB" id="EMD-3592"/>
<dbReference type="EMDB" id="EMD-3593"/>
<dbReference type="EMDB" id="EMD-3727"/>
<dbReference type="EMDB" id="EMD-4088"/>
<dbReference type="EMDB" id="EMD-4147"/>
<dbReference type="EMDB" id="EMD-4148"/>
<dbReference type="EMDB" id="EMD-4982"/>
<dbReference type="EMDB" id="EMD-4984"/>
<dbReference type="EMDB" id="EMD-4985"/>
<dbReference type="EMDB" id="EMD-4987"/>
<dbReference type="EMDB" id="EMD-8771"/>
<dbReference type="EMDB" id="EMD-8773"/>
<dbReference type="EMDB" id="EMD-8774"/>
<dbReference type="EMDB" id="EMD-8775"/>
<dbReference type="EMDB" id="EMD-8776"/>
<dbReference type="EMDB" id="EMD-8777"/>
<dbReference type="SMR" id="P10964"/>
<dbReference type="BioGRID" id="34724">
    <property type="interactions" value="507"/>
</dbReference>
<dbReference type="ComplexPortal" id="CPX-1664">
    <property type="entry name" value="DNA-directed RNA Polymerase I complex"/>
</dbReference>
<dbReference type="DIP" id="DIP-999N"/>
<dbReference type="FunCoup" id="P10964">
    <property type="interactions" value="1356"/>
</dbReference>
<dbReference type="IntAct" id="P10964">
    <property type="interactions" value="54"/>
</dbReference>
<dbReference type="MINT" id="P10964"/>
<dbReference type="STRING" id="4932.YOR341W"/>
<dbReference type="iPTMnet" id="P10964"/>
<dbReference type="PaxDb" id="4932-YOR341W"/>
<dbReference type="PeptideAtlas" id="P10964"/>
<dbReference type="TopDownProteomics" id="P10964"/>
<dbReference type="EnsemblFungi" id="YOR341W_mRNA">
    <property type="protein sequence ID" value="YOR341W"/>
    <property type="gene ID" value="YOR341W"/>
</dbReference>
<dbReference type="GeneID" id="854519"/>
<dbReference type="KEGG" id="sce:YOR341W"/>
<dbReference type="AGR" id="SGD:S000005868"/>
<dbReference type="SGD" id="S000005868">
    <property type="gene designation" value="RPA190"/>
</dbReference>
<dbReference type="VEuPathDB" id="FungiDB:YOR341W"/>
<dbReference type="eggNOG" id="KOG0262">
    <property type="taxonomic scope" value="Eukaryota"/>
</dbReference>
<dbReference type="GeneTree" id="ENSGT00920000149138"/>
<dbReference type="HOGENOM" id="CLU_000487_2_4_1"/>
<dbReference type="InParanoid" id="P10964"/>
<dbReference type="OMA" id="NREDYQQ"/>
<dbReference type="OrthoDB" id="270392at2759"/>
<dbReference type="BioCyc" id="YEAST:G3O-33816-MONOMER"/>
<dbReference type="Reactome" id="R-SCE-73762">
    <property type="pathway name" value="RNA Polymerase I Transcription Initiation"/>
</dbReference>
<dbReference type="Reactome" id="R-SCE-73772">
    <property type="pathway name" value="RNA Polymerase I Promoter Escape"/>
</dbReference>
<dbReference type="BioGRID-ORCS" id="854519">
    <property type="hits" value="5 hits in 10 CRISPR screens"/>
</dbReference>
<dbReference type="CD-CODE" id="BDAE0F88">
    <property type="entry name" value="Nucleolus"/>
</dbReference>
<dbReference type="EvolutionaryTrace" id="P10964"/>
<dbReference type="PRO" id="PR:P10964"/>
<dbReference type="Proteomes" id="UP000002311">
    <property type="component" value="Chromosome XV"/>
</dbReference>
<dbReference type="RNAct" id="P10964">
    <property type="molecule type" value="protein"/>
</dbReference>
<dbReference type="GO" id="GO:0005739">
    <property type="term" value="C:mitochondrion"/>
    <property type="evidence" value="ECO:0007669"/>
    <property type="project" value="GOC"/>
</dbReference>
<dbReference type="GO" id="GO:0005730">
    <property type="term" value="C:nucleolus"/>
    <property type="evidence" value="ECO:0000314"/>
    <property type="project" value="SGD"/>
</dbReference>
<dbReference type="GO" id="GO:0005634">
    <property type="term" value="C:nucleus"/>
    <property type="evidence" value="ECO:0000314"/>
    <property type="project" value="ComplexPortal"/>
</dbReference>
<dbReference type="GO" id="GO:0005736">
    <property type="term" value="C:RNA polymerase I complex"/>
    <property type="evidence" value="ECO:0000314"/>
    <property type="project" value="UniProtKB"/>
</dbReference>
<dbReference type="GO" id="GO:0003677">
    <property type="term" value="F:DNA binding"/>
    <property type="evidence" value="ECO:0007669"/>
    <property type="project" value="InterPro"/>
</dbReference>
<dbReference type="GO" id="GO:0003899">
    <property type="term" value="F:DNA-directed RNA polymerase activity"/>
    <property type="evidence" value="ECO:0000314"/>
    <property type="project" value="UniProtKB"/>
</dbReference>
<dbReference type="GO" id="GO:0046872">
    <property type="term" value="F:metal ion binding"/>
    <property type="evidence" value="ECO:0007669"/>
    <property type="project" value="UniProtKB-KW"/>
</dbReference>
<dbReference type="GO" id="GO:1990841">
    <property type="term" value="F:promoter-specific chromatin binding"/>
    <property type="evidence" value="ECO:0000314"/>
    <property type="project" value="SGD"/>
</dbReference>
<dbReference type="GO" id="GO:0042790">
    <property type="term" value="P:nucleolar large rRNA transcription by RNA polymerase I"/>
    <property type="evidence" value="ECO:0000314"/>
    <property type="project" value="ComplexPortal"/>
</dbReference>
<dbReference type="GO" id="GO:0042254">
    <property type="term" value="P:ribosome biogenesis"/>
    <property type="evidence" value="ECO:0007669"/>
    <property type="project" value="UniProtKB-KW"/>
</dbReference>
<dbReference type="GO" id="GO:0006363">
    <property type="term" value="P:termination of RNA polymerase I transcription"/>
    <property type="evidence" value="ECO:0000314"/>
    <property type="project" value="ComplexPortal"/>
</dbReference>
<dbReference type="GO" id="GO:0006360">
    <property type="term" value="P:transcription by RNA polymerase I"/>
    <property type="evidence" value="ECO:0000314"/>
    <property type="project" value="UniProtKB"/>
</dbReference>
<dbReference type="GO" id="GO:0006362">
    <property type="term" value="P:transcription elongation by RNA polymerase I"/>
    <property type="evidence" value="ECO:0000314"/>
    <property type="project" value="ComplexPortal"/>
</dbReference>
<dbReference type="GO" id="GO:0006361">
    <property type="term" value="P:transcription initiation at RNA polymerase I promoter"/>
    <property type="evidence" value="ECO:0000314"/>
    <property type="project" value="ComplexPortal"/>
</dbReference>
<dbReference type="CDD" id="cd02735">
    <property type="entry name" value="RNAP_I_Rpa1_C"/>
    <property type="match status" value="1"/>
</dbReference>
<dbReference type="CDD" id="cd01435">
    <property type="entry name" value="RNAP_I_RPA1_N"/>
    <property type="match status" value="1"/>
</dbReference>
<dbReference type="FunFam" id="2.40.40.20:FF:000019">
    <property type="entry name" value="DNA-directed RNA polymerase II subunit RPB1"/>
    <property type="match status" value="1"/>
</dbReference>
<dbReference type="FunFam" id="1.10.132.30:FF:000005">
    <property type="entry name" value="DNA-directed RNA polymerase subunit"/>
    <property type="match status" value="1"/>
</dbReference>
<dbReference type="FunFam" id="1.10.274.100:FF:000006">
    <property type="entry name" value="DNA-directed RNA polymerase subunit"/>
    <property type="match status" value="1"/>
</dbReference>
<dbReference type="FunFam" id="1.10.357.120:FF:000002">
    <property type="entry name" value="DNA-directed RNA polymerase subunit"/>
    <property type="match status" value="1"/>
</dbReference>
<dbReference type="FunFam" id="3.30.1490.180:FF:000003">
    <property type="entry name" value="DNA-directed RNA polymerase subunit"/>
    <property type="match status" value="1"/>
</dbReference>
<dbReference type="FunFam" id="3.30.70.2850:FF:000002">
    <property type="entry name" value="DNA-directed RNA polymerase subunit"/>
    <property type="match status" value="1"/>
</dbReference>
<dbReference type="FunFam" id="4.10.860.120:FF:000006">
    <property type="entry name" value="DNA-directed RNA polymerase subunit"/>
    <property type="match status" value="1"/>
</dbReference>
<dbReference type="Gene3D" id="1.10.132.30">
    <property type="match status" value="1"/>
</dbReference>
<dbReference type="Gene3D" id="1.10.150.390">
    <property type="match status" value="1"/>
</dbReference>
<dbReference type="Gene3D" id="1.10.357.120">
    <property type="match status" value="1"/>
</dbReference>
<dbReference type="Gene3D" id="2.40.40.20">
    <property type="match status" value="1"/>
</dbReference>
<dbReference type="Gene3D" id="3.30.70.2850">
    <property type="match status" value="1"/>
</dbReference>
<dbReference type="Gene3D" id="3.30.1490.180">
    <property type="entry name" value="RNA polymerase ii"/>
    <property type="match status" value="1"/>
</dbReference>
<dbReference type="Gene3D" id="4.10.860.120">
    <property type="entry name" value="RNA polymerase II, clamp domain"/>
    <property type="match status" value="1"/>
</dbReference>
<dbReference type="Gene3D" id="1.10.274.100">
    <property type="entry name" value="RNA polymerase Rpb1, domain 3"/>
    <property type="match status" value="1"/>
</dbReference>
<dbReference type="InterPro" id="IPR047107">
    <property type="entry name" value="DNA-dir_RNA_pol1_lsu_C"/>
</dbReference>
<dbReference type="InterPro" id="IPR015699">
    <property type="entry name" value="DNA-dir_RNA_pol1_lsu_N"/>
</dbReference>
<dbReference type="InterPro" id="IPR045867">
    <property type="entry name" value="DNA-dir_RpoC_beta_prime"/>
</dbReference>
<dbReference type="InterPro" id="IPR000722">
    <property type="entry name" value="RNA_pol_asu"/>
</dbReference>
<dbReference type="InterPro" id="IPR006592">
    <property type="entry name" value="RNA_pol_N"/>
</dbReference>
<dbReference type="InterPro" id="IPR007080">
    <property type="entry name" value="RNA_pol_Rpb1_1"/>
</dbReference>
<dbReference type="InterPro" id="IPR007066">
    <property type="entry name" value="RNA_pol_Rpb1_3"/>
</dbReference>
<dbReference type="InterPro" id="IPR042102">
    <property type="entry name" value="RNA_pol_Rpb1_3_sf"/>
</dbReference>
<dbReference type="InterPro" id="IPR007083">
    <property type="entry name" value="RNA_pol_Rpb1_4"/>
</dbReference>
<dbReference type="InterPro" id="IPR007081">
    <property type="entry name" value="RNA_pol_Rpb1_5"/>
</dbReference>
<dbReference type="InterPro" id="IPR044893">
    <property type="entry name" value="RNA_pol_Rpb1_clamp_domain"/>
</dbReference>
<dbReference type="InterPro" id="IPR038120">
    <property type="entry name" value="Rpb1_funnel_sf"/>
</dbReference>
<dbReference type="PANTHER" id="PTHR19376">
    <property type="entry name" value="DNA-DIRECTED RNA POLYMERASE"/>
    <property type="match status" value="1"/>
</dbReference>
<dbReference type="PANTHER" id="PTHR19376:SF11">
    <property type="entry name" value="DNA-DIRECTED RNA POLYMERASE I SUBUNIT RPA1"/>
    <property type="match status" value="1"/>
</dbReference>
<dbReference type="Pfam" id="PF04997">
    <property type="entry name" value="RNA_pol_Rpb1_1"/>
    <property type="match status" value="1"/>
</dbReference>
<dbReference type="Pfam" id="PF00623">
    <property type="entry name" value="RNA_pol_Rpb1_2"/>
    <property type="match status" value="1"/>
</dbReference>
<dbReference type="Pfam" id="PF04983">
    <property type="entry name" value="RNA_pol_Rpb1_3"/>
    <property type="match status" value="1"/>
</dbReference>
<dbReference type="Pfam" id="PF05000">
    <property type="entry name" value="RNA_pol_Rpb1_4"/>
    <property type="match status" value="1"/>
</dbReference>
<dbReference type="Pfam" id="PF04998">
    <property type="entry name" value="RNA_pol_Rpb1_5"/>
    <property type="match status" value="1"/>
</dbReference>
<dbReference type="SMART" id="SM00663">
    <property type="entry name" value="RPOLA_N"/>
    <property type="match status" value="1"/>
</dbReference>
<dbReference type="SUPFAM" id="SSF64484">
    <property type="entry name" value="beta and beta-prime subunits of DNA dependent RNA-polymerase"/>
    <property type="match status" value="1"/>
</dbReference>
<feature type="chain" id="PRO_0000073930" description="DNA-directed RNA polymerase I subunit RPA190">
    <location>
        <begin position="1"/>
        <end position="1664"/>
    </location>
</feature>
<feature type="region of interest" description="Disordered" evidence="3">
    <location>
        <begin position="280"/>
        <end position="310"/>
    </location>
</feature>
<feature type="region of interest" description="Bridging helix" evidence="1">
    <location>
        <begin position="992"/>
        <end position="1004"/>
    </location>
</feature>
<feature type="region of interest" description="Disordered" evidence="3">
    <location>
        <begin position="1343"/>
        <end position="1423"/>
    </location>
</feature>
<feature type="compositionally biased region" description="Basic and acidic residues" evidence="3">
    <location>
        <begin position="1393"/>
        <end position="1414"/>
    </location>
</feature>
<feature type="binding site" evidence="10 13">
    <location>
        <position position="62"/>
    </location>
    <ligand>
        <name>Zn(2+)</name>
        <dbReference type="ChEBI" id="CHEBI:29105"/>
        <label>1</label>
    </ligand>
</feature>
<feature type="binding site" evidence="10 13">
    <location>
        <position position="65"/>
    </location>
    <ligand>
        <name>Zn(2+)</name>
        <dbReference type="ChEBI" id="CHEBI:29105"/>
        <label>1</label>
    </ligand>
</feature>
<feature type="binding site" evidence="10 13">
    <location>
        <position position="72"/>
    </location>
    <ligand>
        <name>Zn(2+)</name>
        <dbReference type="ChEBI" id="CHEBI:29105"/>
        <label>1</label>
    </ligand>
</feature>
<feature type="binding site" evidence="10 13">
    <location>
        <position position="75"/>
    </location>
    <ligand>
        <name>Zn(2+)</name>
        <dbReference type="ChEBI" id="CHEBI:29105"/>
        <label>1</label>
    </ligand>
</feature>
<feature type="binding site" evidence="10 13">
    <location>
        <position position="102"/>
    </location>
    <ligand>
        <name>Zn(2+)</name>
        <dbReference type="ChEBI" id="CHEBI:29105"/>
        <label>2</label>
    </ligand>
</feature>
<feature type="binding site" evidence="10 13">
    <location>
        <position position="105"/>
    </location>
    <ligand>
        <name>Zn(2+)</name>
        <dbReference type="ChEBI" id="CHEBI:29105"/>
        <label>2</label>
    </ligand>
</feature>
<feature type="binding site" evidence="10 13">
    <location>
        <position position="233"/>
    </location>
    <ligand>
        <name>Zn(2+)</name>
        <dbReference type="ChEBI" id="CHEBI:29105"/>
        <label>2</label>
    </ligand>
</feature>
<feature type="binding site" evidence="10 13">
    <location>
        <position position="236"/>
    </location>
    <ligand>
        <name>Zn(2+)</name>
        <dbReference type="ChEBI" id="CHEBI:29105"/>
        <label>2</label>
    </ligand>
</feature>
<feature type="binding site" evidence="2">
    <location>
        <position position="627"/>
    </location>
    <ligand>
        <name>Mg(2+)</name>
        <dbReference type="ChEBI" id="CHEBI:18420"/>
        <note>catalytic</note>
    </ligand>
</feature>
<feature type="binding site" evidence="2">
    <location>
        <position position="629"/>
    </location>
    <ligand>
        <name>Mg(2+)</name>
        <dbReference type="ChEBI" id="CHEBI:18420"/>
        <note>catalytic</note>
    </ligand>
</feature>
<feature type="binding site" evidence="2">
    <location>
        <position position="631"/>
    </location>
    <ligand>
        <name>Mg(2+)</name>
        <dbReference type="ChEBI" id="CHEBI:18420"/>
        <note>catalytic</note>
    </ligand>
</feature>
<feature type="modified residue" description="Phosphoserine" evidence="15">
    <location>
        <position position="889"/>
    </location>
</feature>
<feature type="modified residue" description="Phosphoserine" evidence="14">
    <location>
        <position position="1636"/>
    </location>
</feature>
<feature type="sequence conflict" description="In Ref. 1; AAA34890." evidence="12" ref="1">
    <original>N</original>
    <variation>T</variation>
    <location>
        <position position="158"/>
    </location>
</feature>
<feature type="strand" evidence="23">
    <location>
        <begin position="14"/>
        <end position="18"/>
    </location>
</feature>
<feature type="helix" evidence="23">
    <location>
        <begin position="24"/>
        <end position="27"/>
    </location>
</feature>
<feature type="helix" evidence="25">
    <location>
        <begin position="40"/>
        <end position="42"/>
    </location>
</feature>
<feature type="strand" evidence="20">
    <location>
        <begin position="48"/>
        <end position="50"/>
    </location>
</feature>
<feature type="helix" evidence="16">
    <location>
        <begin position="52"/>
        <end position="54"/>
    </location>
</feature>
<feature type="turn" evidence="23">
    <location>
        <begin position="63"/>
        <end position="65"/>
    </location>
</feature>
<feature type="turn" evidence="23">
    <location>
        <begin position="69"/>
        <end position="71"/>
    </location>
</feature>
<feature type="strand" evidence="23">
    <location>
        <begin position="77"/>
        <end position="86"/>
    </location>
</feature>
<feature type="strand" evidence="23">
    <location>
        <begin position="88"/>
        <end position="90"/>
    </location>
</feature>
<feature type="helix" evidence="23">
    <location>
        <begin position="91"/>
        <end position="98"/>
    </location>
</feature>
<feature type="strand" evidence="20">
    <location>
        <begin position="99"/>
        <end position="101"/>
    </location>
</feature>
<feature type="turn" evidence="23">
    <location>
        <begin position="103"/>
        <end position="105"/>
    </location>
</feature>
<feature type="strand" evidence="23">
    <location>
        <begin position="106"/>
        <end position="110"/>
    </location>
</feature>
<feature type="helix" evidence="23">
    <location>
        <begin position="114"/>
        <end position="124"/>
    </location>
</feature>
<feature type="turn" evidence="23">
    <location>
        <begin position="125"/>
        <end position="128"/>
    </location>
</feature>
<feature type="helix" evidence="23">
    <location>
        <begin position="131"/>
        <end position="134"/>
    </location>
</feature>
<feature type="helix" evidence="16">
    <location>
        <begin position="136"/>
        <end position="138"/>
    </location>
</feature>
<feature type="helix" evidence="23">
    <location>
        <begin position="175"/>
        <end position="198"/>
    </location>
</feature>
<feature type="turn" evidence="17">
    <location>
        <begin position="199"/>
        <end position="201"/>
    </location>
</feature>
<feature type="helix" evidence="23">
    <location>
        <begin position="210"/>
        <end position="223"/>
    </location>
</feature>
<feature type="turn" evidence="23">
    <location>
        <begin position="224"/>
        <end position="228"/>
    </location>
</feature>
<feature type="turn" evidence="23">
    <location>
        <begin position="234"/>
        <end position="236"/>
    </location>
</feature>
<feature type="strand" evidence="23">
    <location>
        <begin position="243"/>
        <end position="245"/>
    </location>
</feature>
<feature type="strand" evidence="23">
    <location>
        <begin position="247"/>
        <end position="249"/>
    </location>
</feature>
<feature type="strand" evidence="23">
    <location>
        <begin position="251"/>
        <end position="253"/>
    </location>
</feature>
<feature type="turn" evidence="23">
    <location>
        <begin position="258"/>
        <end position="261"/>
    </location>
</feature>
<feature type="helix" evidence="23">
    <location>
        <begin position="262"/>
        <end position="265"/>
    </location>
</feature>
<feature type="turn" evidence="23">
    <location>
        <begin position="266"/>
        <end position="269"/>
    </location>
</feature>
<feature type="strand" evidence="21">
    <location>
        <begin position="313"/>
        <end position="315"/>
    </location>
</feature>
<feature type="helix" evidence="23">
    <location>
        <begin position="319"/>
        <end position="330"/>
    </location>
</feature>
<feature type="helix" evidence="23">
    <location>
        <begin position="332"/>
        <end position="338"/>
    </location>
</feature>
<feature type="helix" evidence="23">
    <location>
        <begin position="352"/>
        <end position="354"/>
    </location>
</feature>
<feature type="strand" evidence="23">
    <location>
        <begin position="355"/>
        <end position="362"/>
    </location>
</feature>
<feature type="helix" evidence="23">
    <location>
        <begin position="366"/>
        <end position="368"/>
    </location>
</feature>
<feature type="strand" evidence="16">
    <location>
        <begin position="371"/>
        <end position="373"/>
    </location>
</feature>
<feature type="strand" evidence="16">
    <location>
        <begin position="376"/>
        <end position="378"/>
    </location>
</feature>
<feature type="helix" evidence="23">
    <location>
        <begin position="381"/>
        <end position="405"/>
    </location>
</feature>
<feature type="turn" evidence="16">
    <location>
        <begin position="408"/>
        <end position="410"/>
    </location>
</feature>
<feature type="helix" evidence="23">
    <location>
        <begin position="418"/>
        <end position="438"/>
    </location>
</feature>
<feature type="strand" evidence="23">
    <location>
        <begin position="440"/>
        <end position="442"/>
    </location>
</feature>
<feature type="strand" evidence="22">
    <location>
        <begin position="448"/>
        <end position="450"/>
    </location>
</feature>
<feature type="helix" evidence="23">
    <location>
        <begin position="455"/>
        <end position="458"/>
    </location>
</feature>
<feature type="strand" evidence="23">
    <location>
        <begin position="461"/>
        <end position="464"/>
    </location>
</feature>
<feature type="helix" evidence="23">
    <location>
        <begin position="467"/>
        <end position="470"/>
    </location>
</feature>
<feature type="strand" evidence="23">
    <location>
        <begin position="473"/>
        <end position="486"/>
    </location>
</feature>
<feature type="strand" evidence="23">
    <location>
        <begin position="488"/>
        <end position="490"/>
    </location>
</feature>
<feature type="strand" evidence="23">
    <location>
        <begin position="494"/>
        <end position="497"/>
    </location>
</feature>
<feature type="helix" evidence="23">
    <location>
        <begin position="499"/>
        <end position="502"/>
    </location>
</feature>
<feature type="strand" evidence="23">
    <location>
        <begin position="506"/>
        <end position="510"/>
    </location>
</feature>
<feature type="strand" evidence="23">
    <location>
        <begin position="513"/>
        <end position="515"/>
    </location>
</feature>
<feature type="helix" evidence="23">
    <location>
        <begin position="516"/>
        <end position="525"/>
    </location>
</feature>
<feature type="turn" evidence="23">
    <location>
        <begin position="526"/>
        <end position="528"/>
    </location>
</feature>
<feature type="strand" evidence="23">
    <location>
        <begin position="529"/>
        <end position="531"/>
    </location>
</feature>
<feature type="strand" evidence="23">
    <location>
        <begin position="533"/>
        <end position="537"/>
    </location>
</feature>
<feature type="strand" evidence="23">
    <location>
        <begin position="543"/>
        <end position="545"/>
    </location>
</feature>
<feature type="helix" evidence="23">
    <location>
        <begin position="551"/>
        <end position="558"/>
    </location>
</feature>
<feature type="turn" evidence="16">
    <location>
        <begin position="559"/>
        <end position="562"/>
    </location>
</feature>
<feature type="helix" evidence="16">
    <location>
        <begin position="568"/>
        <end position="570"/>
    </location>
</feature>
<feature type="strand" evidence="23">
    <location>
        <begin position="576"/>
        <end position="580"/>
    </location>
</feature>
<feature type="strand" evidence="23">
    <location>
        <begin position="586"/>
        <end position="593"/>
    </location>
</feature>
<feature type="helix" evidence="23">
    <location>
        <begin position="597"/>
        <end position="599"/>
    </location>
</feature>
<feature type="strand" evidence="23">
    <location>
        <begin position="600"/>
        <end position="607"/>
    </location>
</feature>
<feature type="strand" evidence="23">
    <location>
        <begin position="613"/>
        <end position="616"/>
    </location>
</feature>
<feature type="helix" evidence="23">
    <location>
        <begin position="618"/>
        <end position="620"/>
    </location>
</feature>
<feature type="turn" evidence="23">
    <location>
        <begin position="621"/>
        <end position="625"/>
    </location>
</feature>
<feature type="strand" evidence="23">
    <location>
        <begin position="628"/>
        <end position="630"/>
    </location>
</feature>
<feature type="strand" evidence="23">
    <location>
        <begin position="632"/>
        <end position="636"/>
    </location>
</feature>
<feature type="helix" evidence="23">
    <location>
        <begin position="641"/>
        <end position="649"/>
    </location>
</feature>
<feature type="turn" evidence="23">
    <location>
        <begin position="653"/>
        <end position="656"/>
    </location>
</feature>
<feature type="turn" evidence="23">
    <location>
        <begin position="660"/>
        <end position="662"/>
    </location>
</feature>
<feature type="helix" evidence="23">
    <location>
        <begin position="674"/>
        <end position="680"/>
    </location>
</feature>
<feature type="strand" evidence="23">
    <location>
        <begin position="682"/>
        <end position="684"/>
    </location>
</feature>
<feature type="strand" evidence="16">
    <location>
        <begin position="686"/>
        <end position="688"/>
    </location>
</feature>
<feature type="helix" evidence="23">
    <location>
        <begin position="689"/>
        <end position="699"/>
    </location>
</feature>
<feature type="turn" evidence="23">
    <location>
        <begin position="702"/>
        <end position="705"/>
    </location>
</feature>
<feature type="strand" evidence="23">
    <location>
        <begin position="708"/>
        <end position="711"/>
    </location>
</feature>
<feature type="strand" evidence="23">
    <location>
        <begin position="721"/>
        <end position="723"/>
    </location>
</feature>
<feature type="strand" evidence="23">
    <location>
        <begin position="725"/>
        <end position="728"/>
    </location>
</feature>
<feature type="helix" evidence="23">
    <location>
        <begin position="729"/>
        <end position="739"/>
    </location>
</feature>
<feature type="strand" evidence="21">
    <location>
        <begin position="742"/>
        <end position="744"/>
    </location>
</feature>
<feature type="strand" evidence="23">
    <location>
        <begin position="748"/>
        <end position="752"/>
    </location>
</feature>
<feature type="helix" evidence="23">
    <location>
        <begin position="757"/>
        <end position="760"/>
    </location>
</feature>
<feature type="strand" evidence="24">
    <location>
        <begin position="761"/>
        <end position="763"/>
    </location>
</feature>
<feature type="strand" evidence="23">
    <location>
        <begin position="768"/>
        <end position="772"/>
    </location>
</feature>
<feature type="strand" evidence="23">
    <location>
        <begin position="775"/>
        <end position="778"/>
    </location>
</feature>
<feature type="helix" evidence="23">
    <location>
        <begin position="783"/>
        <end position="786"/>
    </location>
</feature>
<feature type="helix" evidence="23">
    <location>
        <begin position="793"/>
        <end position="800"/>
    </location>
</feature>
<feature type="helix" evidence="23">
    <location>
        <begin position="803"/>
        <end position="823"/>
    </location>
</feature>
<feature type="helix" evidence="23">
    <location>
        <begin position="831"/>
        <end position="833"/>
    </location>
</feature>
<feature type="helix" evidence="23">
    <location>
        <begin position="839"/>
        <end position="847"/>
    </location>
</feature>
<feature type="helix" evidence="23">
    <location>
        <begin position="848"/>
        <end position="850"/>
    </location>
</feature>
<feature type="helix" evidence="23">
    <location>
        <begin position="853"/>
        <end position="861"/>
    </location>
</feature>
<feature type="helix" evidence="23">
    <location>
        <begin position="873"/>
        <end position="883"/>
    </location>
</feature>
<feature type="helix" evidence="23">
    <location>
        <begin position="886"/>
        <end position="911"/>
    </location>
</feature>
<feature type="turn" evidence="23">
    <location>
        <begin position="912"/>
        <end position="915"/>
    </location>
</feature>
<feature type="strand" evidence="23">
    <location>
        <begin position="916"/>
        <end position="918"/>
    </location>
</feature>
<feature type="turn" evidence="23">
    <location>
        <begin position="920"/>
        <end position="922"/>
    </location>
</feature>
<feature type="helix" evidence="23">
    <location>
        <begin position="924"/>
        <end position="931"/>
    </location>
</feature>
<feature type="strand" evidence="23">
    <location>
        <begin position="932"/>
        <end position="934"/>
    </location>
</feature>
<feature type="helix" evidence="23">
    <location>
        <begin position="937"/>
        <end position="944"/>
    </location>
</feature>
<feature type="turn" evidence="21">
    <location>
        <begin position="953"/>
        <end position="955"/>
    </location>
</feature>
<feature type="strand" evidence="19">
    <location>
        <begin position="961"/>
        <end position="963"/>
    </location>
</feature>
<feature type="helix" evidence="23">
    <location>
        <begin position="977"/>
        <end position="979"/>
    </location>
</feature>
<feature type="turn" evidence="23">
    <location>
        <begin position="986"/>
        <end position="988"/>
    </location>
</feature>
<feature type="helix" evidence="23">
    <location>
        <begin position="992"/>
        <end position="1009"/>
    </location>
</feature>
<feature type="helix" evidence="21">
    <location>
        <begin position="1010"/>
        <end position="1012"/>
    </location>
</feature>
<feature type="strand" evidence="23">
    <location>
        <begin position="1013"/>
        <end position="1016"/>
    </location>
</feature>
<feature type="helix" evidence="23">
    <location>
        <begin position="1017"/>
        <end position="1026"/>
    </location>
</feature>
<feature type="strand" evidence="20">
    <location>
        <begin position="1027"/>
        <end position="1029"/>
    </location>
</feature>
<feature type="strand" evidence="17">
    <location>
        <begin position="1036"/>
        <end position="1039"/>
    </location>
</feature>
<feature type="strand" evidence="19">
    <location>
        <begin position="1041"/>
        <end position="1043"/>
    </location>
</feature>
<feature type="strand" evidence="23">
    <location>
        <begin position="1045"/>
        <end position="1049"/>
    </location>
</feature>
<feature type="helix" evidence="23">
    <location>
        <begin position="1050"/>
        <end position="1052"/>
    </location>
</feature>
<feature type="helix" evidence="23">
    <location>
        <begin position="1057"/>
        <end position="1059"/>
    </location>
</feature>
<feature type="strand" evidence="21">
    <location>
        <begin position="1061"/>
        <end position="1064"/>
    </location>
</feature>
<feature type="helix" evidence="23">
    <location>
        <begin position="1066"/>
        <end position="1071"/>
    </location>
</feature>
<feature type="helix" evidence="23">
    <location>
        <begin position="1073"/>
        <end position="1079"/>
    </location>
</feature>
<feature type="helix" evidence="23">
    <location>
        <begin position="1083"/>
        <end position="1085"/>
    </location>
</feature>
<feature type="strand" evidence="23">
    <location>
        <begin position="1088"/>
        <end position="1090"/>
    </location>
</feature>
<feature type="helix" evidence="23">
    <location>
        <begin position="1093"/>
        <end position="1107"/>
    </location>
</feature>
<feature type="turn" evidence="23">
    <location>
        <begin position="1108"/>
        <end position="1110"/>
    </location>
</feature>
<feature type="strand" evidence="23">
    <location>
        <begin position="1113"/>
        <end position="1115"/>
    </location>
</feature>
<feature type="helix" evidence="23">
    <location>
        <begin position="1123"/>
        <end position="1126"/>
    </location>
</feature>
<feature type="turn" evidence="23">
    <location>
        <begin position="1129"/>
        <end position="1131"/>
    </location>
</feature>
<feature type="helix" evidence="23">
    <location>
        <begin position="1138"/>
        <end position="1149"/>
    </location>
</feature>
<feature type="helix" evidence="16">
    <location>
        <begin position="1152"/>
        <end position="1155"/>
    </location>
</feature>
<feature type="strand" evidence="16">
    <location>
        <begin position="1157"/>
        <end position="1160"/>
    </location>
</feature>
<feature type="helix" evidence="23">
    <location>
        <begin position="1164"/>
        <end position="1175"/>
    </location>
</feature>
<feature type="helix" evidence="23">
    <location>
        <begin position="1185"/>
        <end position="1194"/>
    </location>
</feature>
<feature type="turn" evidence="23">
    <location>
        <begin position="1195"/>
        <end position="1197"/>
    </location>
</feature>
<feature type="helix" evidence="23">
    <location>
        <begin position="1218"/>
        <end position="1225"/>
    </location>
</feature>
<feature type="turn" evidence="17">
    <location>
        <begin position="1226"/>
        <end position="1228"/>
    </location>
</feature>
<feature type="strand" evidence="23">
    <location>
        <begin position="1237"/>
        <end position="1242"/>
    </location>
</feature>
<feature type="strand" evidence="23">
    <location>
        <begin position="1244"/>
        <end position="1246"/>
    </location>
</feature>
<feature type="helix" evidence="23">
    <location>
        <begin position="1248"/>
        <end position="1256"/>
    </location>
</feature>
<feature type="strand" evidence="18">
    <location>
        <begin position="1259"/>
        <end position="1262"/>
    </location>
</feature>
<feature type="helix" evidence="23">
    <location>
        <begin position="1263"/>
        <end position="1266"/>
    </location>
</feature>
<feature type="strand" evidence="23">
    <location>
        <begin position="1267"/>
        <end position="1275"/>
    </location>
</feature>
<feature type="strand" evidence="23">
    <location>
        <begin position="1289"/>
        <end position="1296"/>
    </location>
</feature>
<feature type="helix" evidence="23">
    <location>
        <begin position="1299"/>
        <end position="1306"/>
    </location>
</feature>
<feature type="helix" evidence="23">
    <location>
        <begin position="1310"/>
        <end position="1317"/>
    </location>
</feature>
<feature type="turn" evidence="23">
    <location>
        <begin position="1318"/>
        <end position="1320"/>
    </location>
</feature>
<feature type="helix" evidence="23">
    <location>
        <begin position="1321"/>
        <end position="1337"/>
    </location>
</feature>
<feature type="strand" evidence="17">
    <location>
        <begin position="1344"/>
        <end position="1346"/>
    </location>
</feature>
<feature type="strand" evidence="21">
    <location>
        <begin position="1355"/>
        <end position="1360"/>
    </location>
</feature>
<feature type="helix" evidence="16">
    <location>
        <begin position="1364"/>
        <end position="1366"/>
    </location>
</feature>
<feature type="helix" evidence="16">
    <location>
        <begin position="1369"/>
        <end position="1378"/>
    </location>
</feature>
<feature type="strand" evidence="16">
    <location>
        <begin position="1382"/>
        <end position="1384"/>
    </location>
</feature>
<feature type="helix" evidence="16">
    <location>
        <begin position="1389"/>
        <end position="1394"/>
    </location>
</feature>
<feature type="strand" evidence="21">
    <location>
        <begin position="1403"/>
        <end position="1406"/>
    </location>
</feature>
<feature type="helix" evidence="23">
    <location>
        <begin position="1441"/>
        <end position="1453"/>
    </location>
</feature>
<feature type="strand" evidence="23">
    <location>
        <begin position="1454"/>
        <end position="1456"/>
    </location>
</feature>
<feature type="strand" evidence="21">
    <location>
        <begin position="1460"/>
        <end position="1462"/>
    </location>
</feature>
<feature type="turn" evidence="23">
    <location>
        <begin position="1464"/>
        <end position="1466"/>
    </location>
</feature>
<feature type="strand" evidence="23">
    <location>
        <begin position="1469"/>
        <end position="1475"/>
    </location>
</feature>
<feature type="strand" evidence="20">
    <location>
        <begin position="1478"/>
        <end position="1480"/>
    </location>
</feature>
<feature type="helix" evidence="23">
    <location>
        <begin position="1485"/>
        <end position="1493"/>
    </location>
</feature>
<feature type="strand" evidence="23">
    <location>
        <begin position="1497"/>
        <end position="1499"/>
    </location>
</feature>
<feature type="strand" evidence="23">
    <location>
        <begin position="1506"/>
        <end position="1508"/>
    </location>
</feature>
<feature type="helix" evidence="22">
    <location>
        <begin position="1513"/>
        <end position="1515"/>
    </location>
</feature>
<feature type="strand" evidence="23">
    <location>
        <begin position="1518"/>
        <end position="1523"/>
    </location>
</feature>
<feature type="helix" evidence="23">
    <location>
        <begin position="1526"/>
        <end position="1529"/>
    </location>
</feature>
<feature type="helix" evidence="23">
    <location>
        <begin position="1530"/>
        <end position="1532"/>
    </location>
</feature>
<feature type="turn" evidence="23">
    <location>
        <begin position="1533"/>
        <end position="1535"/>
    </location>
</feature>
<feature type="helix" evidence="23">
    <location>
        <begin position="1538"/>
        <end position="1540"/>
    </location>
</feature>
<feature type="strand" evidence="23">
    <location>
        <begin position="1542"/>
        <end position="1544"/>
    </location>
</feature>
<feature type="helix" evidence="23">
    <location>
        <begin position="1546"/>
        <end position="1552"/>
    </location>
</feature>
<feature type="helix" evidence="23">
    <location>
        <begin position="1555"/>
        <end position="1571"/>
    </location>
</feature>
<feature type="turn" evidence="23">
    <location>
        <begin position="1572"/>
        <end position="1574"/>
    </location>
</feature>
<feature type="helix" evidence="23">
    <location>
        <begin position="1579"/>
        <end position="1589"/>
    </location>
</feature>
<feature type="turn" evidence="23">
    <location>
        <begin position="1590"/>
        <end position="1592"/>
    </location>
</feature>
<feature type="helix" evidence="23">
    <location>
        <begin position="1600"/>
        <end position="1603"/>
    </location>
</feature>
<feature type="helix" evidence="23">
    <location>
        <begin position="1609"/>
        <end position="1615"/>
    </location>
</feature>
<feature type="helix" evidence="23">
    <location>
        <begin position="1618"/>
        <end position="1626"/>
    </location>
</feature>
<feature type="turn" evidence="23">
    <location>
        <begin position="1627"/>
        <end position="1629"/>
    </location>
</feature>
<feature type="helix" evidence="23">
    <location>
        <begin position="1637"/>
        <end position="1643"/>
    </location>
</feature>
<feature type="strand" evidence="23">
    <location>
        <begin position="1648"/>
        <end position="1650"/>
    </location>
</feature>
<feature type="strand" evidence="23">
    <location>
        <begin position="1653"/>
        <end position="1660"/>
    </location>
</feature>
<evidence type="ECO:0000250" key="1"/>
<evidence type="ECO:0000250" key="2">
    <source>
        <dbReference type="UniProtKB" id="P04050"/>
    </source>
</evidence>
<evidence type="ECO:0000256" key="3">
    <source>
        <dbReference type="SAM" id="MobiDB-lite"/>
    </source>
</evidence>
<evidence type="ECO:0000269" key="4">
    <source>
    </source>
</evidence>
<evidence type="ECO:0000269" key="5">
    <source>
    </source>
</evidence>
<evidence type="ECO:0000269" key="6">
    <source>
    </source>
</evidence>
<evidence type="ECO:0000269" key="7">
    <source>
    </source>
</evidence>
<evidence type="ECO:0000269" key="8">
    <source>
    </source>
</evidence>
<evidence type="ECO:0000269" key="9">
    <source>
    </source>
</evidence>
<evidence type="ECO:0000269" key="10">
    <source>
    </source>
</evidence>
<evidence type="ECO:0000269" key="11">
    <source>
    </source>
</evidence>
<evidence type="ECO:0000305" key="12"/>
<evidence type="ECO:0007744" key="13">
    <source>
        <dbReference type="PDB" id="4C2M"/>
    </source>
</evidence>
<evidence type="ECO:0007744" key="14">
    <source>
    </source>
</evidence>
<evidence type="ECO:0007744" key="15">
    <source>
    </source>
</evidence>
<evidence type="ECO:0007829" key="16">
    <source>
        <dbReference type="PDB" id="4C2M"/>
    </source>
</evidence>
<evidence type="ECO:0007829" key="17">
    <source>
        <dbReference type="PDB" id="4C3I"/>
    </source>
</evidence>
<evidence type="ECO:0007829" key="18">
    <source>
        <dbReference type="PDB" id="5N61"/>
    </source>
</evidence>
<evidence type="ECO:0007829" key="19">
    <source>
        <dbReference type="PDB" id="6HKO"/>
    </source>
</evidence>
<evidence type="ECO:0007829" key="20">
    <source>
        <dbReference type="PDB" id="6HLQ"/>
    </source>
</evidence>
<evidence type="ECO:0007829" key="21">
    <source>
        <dbReference type="PDB" id="6RQL"/>
    </source>
</evidence>
<evidence type="ECO:0007829" key="22">
    <source>
        <dbReference type="PDB" id="6RRD"/>
    </source>
</evidence>
<evidence type="ECO:0007829" key="23">
    <source>
        <dbReference type="PDB" id="6RUI"/>
    </source>
</evidence>
<evidence type="ECO:0007829" key="24">
    <source>
        <dbReference type="PDB" id="6RUO"/>
    </source>
</evidence>
<evidence type="ECO:0007829" key="25">
    <source>
        <dbReference type="PDB" id="6RWE"/>
    </source>
</evidence>
<gene>
    <name type="primary">RPA190</name>
    <name type="synonym">RPA1</name>
    <name type="synonym">RRN1</name>
    <name type="ordered locus">YOR341W</name>
    <name type="ORF">O6276</name>
</gene>